<keyword id="KW-0002">3D-structure</keyword>
<keyword id="KW-0131">Cell cycle</keyword>
<keyword id="KW-0132">Cell division</keyword>
<keyword id="KW-0175">Coiled coil</keyword>
<keyword id="KW-0963">Cytoplasm</keyword>
<keyword id="KW-0238">DNA-binding</keyword>
<dbReference type="EMBL" id="CP000647">
    <property type="protein sequence ID" value="ABR79366.1"/>
    <property type="molecule type" value="Genomic_DNA"/>
</dbReference>
<dbReference type="RefSeq" id="WP_002922598.1">
    <property type="nucleotide sequence ID" value="NC_009648.1"/>
</dbReference>
<dbReference type="PDB" id="5HSZ">
    <property type="method" value="X-ray"/>
    <property type="resolution" value="2.30 A"/>
    <property type="chains" value="A/B=3-198"/>
</dbReference>
<dbReference type="PDBsum" id="5HSZ"/>
<dbReference type="SMR" id="A6TFN2"/>
<dbReference type="STRING" id="272620.KPN_03981"/>
<dbReference type="PaxDb" id="272620-KPN_03981"/>
<dbReference type="EnsemblBacteria" id="ABR79366">
    <property type="protein sequence ID" value="ABR79366"/>
    <property type="gene ID" value="KPN_03981"/>
</dbReference>
<dbReference type="KEGG" id="kpn:KPN_03981"/>
<dbReference type="HOGENOM" id="CLU_069356_5_0_6"/>
<dbReference type="EvolutionaryTrace" id="A6TFN2"/>
<dbReference type="Proteomes" id="UP000000265">
    <property type="component" value="Chromosome"/>
</dbReference>
<dbReference type="GO" id="GO:0043590">
    <property type="term" value="C:bacterial nucleoid"/>
    <property type="evidence" value="ECO:0007669"/>
    <property type="project" value="UniProtKB-UniRule"/>
</dbReference>
<dbReference type="GO" id="GO:0005737">
    <property type="term" value="C:cytoplasm"/>
    <property type="evidence" value="ECO:0007669"/>
    <property type="project" value="UniProtKB-UniRule"/>
</dbReference>
<dbReference type="GO" id="GO:0003700">
    <property type="term" value="F:DNA-binding transcription factor activity"/>
    <property type="evidence" value="ECO:0007669"/>
    <property type="project" value="TreeGrafter"/>
</dbReference>
<dbReference type="GO" id="GO:0000976">
    <property type="term" value="F:transcription cis-regulatory region binding"/>
    <property type="evidence" value="ECO:0007669"/>
    <property type="project" value="TreeGrafter"/>
</dbReference>
<dbReference type="GO" id="GO:0051301">
    <property type="term" value="P:cell division"/>
    <property type="evidence" value="ECO:0007669"/>
    <property type="project" value="UniProtKB-KW"/>
</dbReference>
<dbReference type="GO" id="GO:0010974">
    <property type="term" value="P:negative regulation of division septum assembly"/>
    <property type="evidence" value="ECO:0007669"/>
    <property type="project" value="InterPro"/>
</dbReference>
<dbReference type="FunFam" id="1.10.357.10:FF:000002">
    <property type="entry name" value="Nucleoid occlusion factor SlmA"/>
    <property type="match status" value="1"/>
</dbReference>
<dbReference type="Gene3D" id="1.10.357.10">
    <property type="entry name" value="Tetracycline Repressor, domain 2"/>
    <property type="match status" value="1"/>
</dbReference>
<dbReference type="HAMAP" id="MF_01839">
    <property type="entry name" value="NO_factor_SlmA"/>
    <property type="match status" value="1"/>
</dbReference>
<dbReference type="InterPro" id="IPR023772">
    <property type="entry name" value="DNA-bd_HTH_TetR-type_CS"/>
</dbReference>
<dbReference type="InterPro" id="IPR009057">
    <property type="entry name" value="Homeodomain-like_sf"/>
</dbReference>
<dbReference type="InterPro" id="IPR050109">
    <property type="entry name" value="HTH-type_TetR-like_transc_reg"/>
</dbReference>
<dbReference type="InterPro" id="IPR001647">
    <property type="entry name" value="HTH_TetR"/>
</dbReference>
<dbReference type="InterPro" id="IPR023769">
    <property type="entry name" value="NO_SlmA"/>
</dbReference>
<dbReference type="InterPro" id="IPR054580">
    <property type="entry name" value="SlmA-like_C"/>
</dbReference>
<dbReference type="InterPro" id="IPR036271">
    <property type="entry name" value="Tet_transcr_reg_TetR-rel_C_sf"/>
</dbReference>
<dbReference type="NCBIfam" id="NF007015">
    <property type="entry name" value="PRK09480.1"/>
    <property type="match status" value="1"/>
</dbReference>
<dbReference type="PANTHER" id="PTHR30055">
    <property type="entry name" value="HTH-TYPE TRANSCRIPTIONAL REGULATOR RUTR"/>
    <property type="match status" value="1"/>
</dbReference>
<dbReference type="PANTHER" id="PTHR30055:SF183">
    <property type="entry name" value="NUCLEOID OCCLUSION FACTOR SLMA"/>
    <property type="match status" value="1"/>
</dbReference>
<dbReference type="Pfam" id="PF22276">
    <property type="entry name" value="SlmA-like_C"/>
    <property type="match status" value="1"/>
</dbReference>
<dbReference type="Pfam" id="PF00440">
    <property type="entry name" value="TetR_N"/>
    <property type="match status" value="1"/>
</dbReference>
<dbReference type="SUPFAM" id="SSF46689">
    <property type="entry name" value="Homeodomain-like"/>
    <property type="match status" value="1"/>
</dbReference>
<dbReference type="SUPFAM" id="SSF48498">
    <property type="entry name" value="Tetracyclin repressor-like, C-terminal domain"/>
    <property type="match status" value="1"/>
</dbReference>
<dbReference type="PROSITE" id="PS01081">
    <property type="entry name" value="HTH_TETR_1"/>
    <property type="match status" value="1"/>
</dbReference>
<dbReference type="PROSITE" id="PS50977">
    <property type="entry name" value="HTH_TETR_2"/>
    <property type="match status" value="1"/>
</dbReference>
<accession>A6TFN2</accession>
<organism>
    <name type="scientific">Klebsiella pneumoniae subsp. pneumoniae (strain ATCC 700721 / MGH 78578)</name>
    <dbReference type="NCBI Taxonomy" id="272620"/>
    <lineage>
        <taxon>Bacteria</taxon>
        <taxon>Pseudomonadati</taxon>
        <taxon>Pseudomonadota</taxon>
        <taxon>Gammaproteobacteria</taxon>
        <taxon>Enterobacterales</taxon>
        <taxon>Enterobacteriaceae</taxon>
        <taxon>Klebsiella/Raoultella group</taxon>
        <taxon>Klebsiella</taxon>
        <taxon>Klebsiella pneumoniae complex</taxon>
    </lineage>
</organism>
<protein>
    <recommendedName>
        <fullName evidence="1">Nucleoid occlusion factor SlmA</fullName>
    </recommendedName>
</protein>
<feature type="chain" id="PRO_1000070522" description="Nucleoid occlusion factor SlmA">
    <location>
        <begin position="1"/>
        <end position="198"/>
    </location>
</feature>
<feature type="domain" description="HTH tetR-type" evidence="1">
    <location>
        <begin position="10"/>
        <end position="70"/>
    </location>
</feature>
<feature type="DNA-binding region" description="H-T-H motif" evidence="1">
    <location>
        <begin position="33"/>
        <end position="52"/>
    </location>
</feature>
<feature type="coiled-coil region" evidence="1">
    <location>
        <begin position="117"/>
        <end position="145"/>
    </location>
</feature>
<feature type="turn" evidence="2">
    <location>
        <begin position="4"/>
        <end position="8"/>
    </location>
</feature>
<feature type="helix" evidence="2">
    <location>
        <begin position="10"/>
        <end position="24"/>
    </location>
</feature>
<feature type="helix" evidence="2">
    <location>
        <begin position="26"/>
        <end position="29"/>
    </location>
</feature>
<feature type="helix" evidence="2">
    <location>
        <begin position="34"/>
        <end position="40"/>
    </location>
</feature>
<feature type="helix" evidence="2">
    <location>
        <begin position="45"/>
        <end position="51"/>
    </location>
</feature>
<feature type="helix" evidence="2">
    <location>
        <begin position="55"/>
        <end position="80"/>
    </location>
</feature>
<feature type="helix" evidence="2">
    <location>
        <begin position="84"/>
        <end position="101"/>
    </location>
</feature>
<feature type="helix" evidence="2">
    <location>
        <begin position="103"/>
        <end position="109"/>
    </location>
</feature>
<feature type="strand" evidence="2">
    <location>
        <begin position="115"/>
        <end position="117"/>
    </location>
</feature>
<feature type="helix" evidence="2">
    <location>
        <begin position="119"/>
        <end position="141"/>
    </location>
</feature>
<feature type="helix" evidence="2">
    <location>
        <begin position="143"/>
        <end position="147"/>
    </location>
</feature>
<feature type="helix" evidence="2">
    <location>
        <begin position="155"/>
        <end position="175"/>
    </location>
</feature>
<feature type="turn" evidence="2">
    <location>
        <begin position="176"/>
        <end position="178"/>
    </location>
</feature>
<feature type="turn" evidence="2">
    <location>
        <begin position="182"/>
        <end position="185"/>
    </location>
</feature>
<feature type="helix" evidence="2">
    <location>
        <begin position="186"/>
        <end position="196"/>
    </location>
</feature>
<reference key="1">
    <citation type="submission" date="2006-09" db="EMBL/GenBank/DDBJ databases">
        <authorList>
            <consortium name="The Klebsiella pneumonia Genome Sequencing Project"/>
            <person name="McClelland M."/>
            <person name="Sanderson E.K."/>
            <person name="Spieth J."/>
            <person name="Clifton W.S."/>
            <person name="Latreille P."/>
            <person name="Sabo A."/>
            <person name="Pepin K."/>
            <person name="Bhonagiri V."/>
            <person name="Porwollik S."/>
            <person name="Ali J."/>
            <person name="Wilson R.K."/>
        </authorList>
    </citation>
    <scope>NUCLEOTIDE SEQUENCE [LARGE SCALE GENOMIC DNA]</scope>
    <source>
        <strain>ATCC 700721 / MGH 78578</strain>
    </source>
</reference>
<proteinExistence type="evidence at protein level"/>
<comment type="function">
    <text evidence="1">Required for nucleoid occlusion (NO) phenomenon, which prevents Z-ring formation and cell division over the nucleoid. Acts as a DNA-associated cell division inhibitor that binds simultaneously chromosomal DNA and FtsZ, and disrupts the assembly of FtsZ polymers. SlmA-DNA-binding sequences (SBS) are dispersed on non-Ter regions of the chromosome, preventing FtsZ polymerization at these regions.</text>
</comment>
<comment type="subunit">
    <text evidence="1">Homodimer. Interacts with FtsZ.</text>
</comment>
<comment type="subcellular location">
    <subcellularLocation>
        <location evidence="1">Cytoplasm</location>
        <location evidence="1">Nucleoid</location>
    </subcellularLocation>
</comment>
<comment type="similarity">
    <text evidence="1">Belongs to the nucleoid occlusion factor SlmA family.</text>
</comment>
<sequence length="198" mass="22824">MAEKQTAKRNRREEILQSLALMLESSDGSQRITTAKLAASVGVSEAALYRHFPSKTRMFDSLIEFIEDSLITRINLILKDEKDTTARLRLIVLLILGFGERNPGLTRILTGHALMFEQDRLQGRINQLFERIEAQLRQVMREKKMREGEGYTLDETLLASQLLAFCEGMLSRFVRSEFKYRPTDDFDARWPLVAAQLQ</sequence>
<evidence type="ECO:0000255" key="1">
    <source>
        <dbReference type="HAMAP-Rule" id="MF_01839"/>
    </source>
</evidence>
<evidence type="ECO:0007829" key="2">
    <source>
        <dbReference type="PDB" id="5HSZ"/>
    </source>
</evidence>
<gene>
    <name evidence="1" type="primary">slmA</name>
    <name type="ordered locus">KPN78578_39420</name>
    <name type="ORF">KPN_03981</name>
</gene>
<name>SLMA_KLEP7</name>